<sequence>MSDMEIRIRPVGVVRSPFKTRSDAPAQGRFSSEESEIHIFPEYLDAVDGLELFSHIFVLYWLHLAERNVLRVVPRGKRKKRGVFSTRAPARPNPVGLCLVELLECGEILRVRGLDALDGSPVIDIKPYYEDIDSLGF</sequence>
<comment type="similarity">
    <text evidence="3">Belongs to the tRNA methyltransferase O family.</text>
</comment>
<reference key="1">
    <citation type="journal article" date="1997" name="J. Bacteriol.">
        <title>Complete genome sequence of Methanobacterium thermoautotrophicum deltaH: functional analysis and comparative genomics.</title>
        <authorList>
            <person name="Smith D.R."/>
            <person name="Doucette-Stamm L.A."/>
            <person name="Deloughery C."/>
            <person name="Lee H.-M."/>
            <person name="Dubois J."/>
            <person name="Aldredge T."/>
            <person name="Bashirzadeh R."/>
            <person name="Blakely D."/>
            <person name="Cook R."/>
            <person name="Gilbert K."/>
            <person name="Harrison D."/>
            <person name="Hoang L."/>
            <person name="Keagle P."/>
            <person name="Lumm W."/>
            <person name="Pothier B."/>
            <person name="Qiu D."/>
            <person name="Spadafora R."/>
            <person name="Vicare R."/>
            <person name="Wang Y."/>
            <person name="Wierzbowski J."/>
            <person name="Gibson R."/>
            <person name="Jiwani N."/>
            <person name="Caruso A."/>
            <person name="Bush D."/>
            <person name="Safer H."/>
            <person name="Patwell D."/>
            <person name="Prabhakar S."/>
            <person name="McDougall S."/>
            <person name="Shimer G."/>
            <person name="Goyal A."/>
            <person name="Pietrovski S."/>
            <person name="Church G.M."/>
            <person name="Daniels C.J."/>
            <person name="Mao J.-I."/>
            <person name="Rice P."/>
            <person name="Noelling J."/>
            <person name="Reeve J.N."/>
        </authorList>
    </citation>
    <scope>NUCLEOTIDE SEQUENCE [LARGE SCALE GENOMIC DNA]</scope>
    <source>
        <strain>ATCC 29096 / DSM 1053 / JCM 10044 / NBRC 100330 / Delta H</strain>
    </source>
</reference>
<keyword id="KW-1185">Reference proteome</keyword>
<keyword id="KW-0949">S-adenosyl-L-methionine</keyword>
<feature type="chain" id="PRO_0000155624" description="Probable S-adenosyl-L-methionine-binding protein MTH_1797">
    <location>
        <begin position="1"/>
        <end position="137"/>
    </location>
</feature>
<feature type="domain" description="TsaA-like" evidence="2">
    <location>
        <begin position="8"/>
        <end position="137"/>
    </location>
</feature>
<feature type="binding site" evidence="1">
    <location>
        <begin position="25"/>
        <end position="27"/>
    </location>
    <ligand>
        <name>S-adenosyl-L-methionine</name>
        <dbReference type="ChEBI" id="CHEBI:59789"/>
    </ligand>
</feature>
<feature type="binding site" evidence="1">
    <location>
        <begin position="63"/>
        <end position="64"/>
    </location>
    <ligand>
        <name>S-adenosyl-L-methionine</name>
        <dbReference type="ChEBI" id="CHEBI:59789"/>
    </ligand>
</feature>
<feature type="binding site" evidence="1">
    <location>
        <position position="87"/>
    </location>
    <ligand>
        <name>S-adenosyl-L-methionine</name>
        <dbReference type="ChEBI" id="CHEBI:59789"/>
    </ligand>
</feature>
<feature type="binding site" evidence="1">
    <location>
        <position position="97"/>
    </location>
    <ligand>
        <name>S-adenosyl-L-methionine</name>
        <dbReference type="ChEBI" id="CHEBI:59789"/>
    </ligand>
</feature>
<feature type="binding site" evidence="1">
    <location>
        <begin position="117"/>
        <end position="120"/>
    </location>
    <ligand>
        <name>S-adenosyl-L-methionine</name>
        <dbReference type="ChEBI" id="CHEBI:59789"/>
    </ligand>
</feature>
<organism>
    <name type="scientific">Methanothermobacter thermautotrophicus (strain ATCC 29096 / DSM 1053 / JCM 10044 / NBRC 100330 / Delta H)</name>
    <name type="common">Methanobacterium thermoautotrophicum</name>
    <dbReference type="NCBI Taxonomy" id="187420"/>
    <lineage>
        <taxon>Archaea</taxon>
        <taxon>Methanobacteriati</taxon>
        <taxon>Methanobacteriota</taxon>
        <taxon>Methanomada group</taxon>
        <taxon>Methanobacteria</taxon>
        <taxon>Methanobacteriales</taxon>
        <taxon>Methanobacteriaceae</taxon>
        <taxon>Methanothermobacter</taxon>
    </lineage>
</organism>
<proteinExistence type="inferred from homology"/>
<gene>
    <name type="ordered locus">MTH_1797</name>
</gene>
<evidence type="ECO:0000250" key="1">
    <source>
        <dbReference type="UniProtKB" id="Q6NDF6"/>
    </source>
</evidence>
<evidence type="ECO:0000255" key="2">
    <source>
        <dbReference type="PROSITE-ProRule" id="PRU01003"/>
    </source>
</evidence>
<evidence type="ECO:0000305" key="3"/>
<protein>
    <recommendedName>
        <fullName>Probable S-adenosyl-L-methionine-binding protein MTH_1797</fullName>
    </recommendedName>
</protein>
<accession>O27825</accession>
<name>Y1797_METTH</name>
<dbReference type="EMBL" id="AE000666">
    <property type="protein sequence ID" value="AAB86263.1"/>
    <property type="molecule type" value="Genomic_DNA"/>
</dbReference>
<dbReference type="PIR" id="A69107">
    <property type="entry name" value="A69107"/>
</dbReference>
<dbReference type="RefSeq" id="WP_010877399.1">
    <property type="nucleotide sequence ID" value="NC_000916.1"/>
</dbReference>
<dbReference type="SMR" id="O27825"/>
<dbReference type="STRING" id="187420.MTH_1797"/>
<dbReference type="PaxDb" id="187420-MTH_1797"/>
<dbReference type="EnsemblBacteria" id="AAB86263">
    <property type="protein sequence ID" value="AAB86263"/>
    <property type="gene ID" value="MTH_1797"/>
</dbReference>
<dbReference type="GeneID" id="1470882"/>
<dbReference type="KEGG" id="mth:MTH_1797"/>
<dbReference type="PATRIC" id="fig|187420.15.peg.1752"/>
<dbReference type="HOGENOM" id="CLU_013458_2_0_2"/>
<dbReference type="InParanoid" id="O27825"/>
<dbReference type="Proteomes" id="UP000005223">
    <property type="component" value="Chromosome"/>
</dbReference>
<dbReference type="CDD" id="cd09281">
    <property type="entry name" value="UPF0066"/>
    <property type="match status" value="1"/>
</dbReference>
<dbReference type="Gene3D" id="2.40.30.70">
    <property type="entry name" value="YaeB-like"/>
    <property type="match status" value="1"/>
</dbReference>
<dbReference type="InterPro" id="IPR023370">
    <property type="entry name" value="TrmO-like_N"/>
</dbReference>
<dbReference type="InterPro" id="IPR023368">
    <property type="entry name" value="UPF0066_cons_site"/>
</dbReference>
<dbReference type="InterPro" id="IPR040372">
    <property type="entry name" value="YaeB-like"/>
</dbReference>
<dbReference type="InterPro" id="IPR036413">
    <property type="entry name" value="YaeB-like_sf"/>
</dbReference>
<dbReference type="InterPro" id="IPR036414">
    <property type="entry name" value="YaeB_N_sf"/>
</dbReference>
<dbReference type="NCBIfam" id="TIGR00104">
    <property type="entry name" value="tRNA_TsaA"/>
    <property type="match status" value="1"/>
</dbReference>
<dbReference type="PANTHER" id="PTHR12818">
    <property type="entry name" value="TRNA (ADENINE(37)-N6)-METHYLTRANSFERASE"/>
    <property type="match status" value="1"/>
</dbReference>
<dbReference type="PANTHER" id="PTHR12818:SF0">
    <property type="entry name" value="TRNA (ADENINE(37)-N6)-METHYLTRANSFERASE"/>
    <property type="match status" value="1"/>
</dbReference>
<dbReference type="Pfam" id="PF01980">
    <property type="entry name" value="TrmO_N"/>
    <property type="match status" value="1"/>
</dbReference>
<dbReference type="SUPFAM" id="SSF118196">
    <property type="entry name" value="YaeB-like"/>
    <property type="match status" value="1"/>
</dbReference>
<dbReference type="PROSITE" id="PS01318">
    <property type="entry name" value="TSAA_1"/>
    <property type="match status" value="1"/>
</dbReference>
<dbReference type="PROSITE" id="PS51668">
    <property type="entry name" value="TSAA_2"/>
    <property type="match status" value="1"/>
</dbReference>